<protein>
    <recommendedName>
        <fullName evidence="1">Small ribosomal subunit protein bS18</fullName>
    </recommendedName>
    <alternativeName>
        <fullName evidence="2">30S ribosomal protein S18</fullName>
    </alternativeName>
</protein>
<accession>A6VMD4</accession>
<comment type="function">
    <text evidence="1">Binds as a heterodimer with protein bS6 to the central domain of the 16S rRNA, where it helps stabilize the platform of the 30S subunit.</text>
</comment>
<comment type="subunit">
    <text evidence="1">Part of the 30S ribosomal subunit. Forms a tight heterodimer with protein bS6.</text>
</comment>
<comment type="similarity">
    <text evidence="1">Belongs to the bacterial ribosomal protein bS18 family.</text>
</comment>
<name>RS18_ACTSZ</name>
<feature type="chain" id="PRO_1000071897" description="Small ribosomal subunit protein bS18">
    <location>
        <begin position="1"/>
        <end position="75"/>
    </location>
</feature>
<dbReference type="EMBL" id="CP000746">
    <property type="protein sequence ID" value="ABR74131.1"/>
    <property type="molecule type" value="Genomic_DNA"/>
</dbReference>
<dbReference type="RefSeq" id="WP_005759927.1">
    <property type="nucleotide sequence ID" value="NC_009655.1"/>
</dbReference>
<dbReference type="SMR" id="A6VMD4"/>
<dbReference type="STRING" id="339671.Asuc_0759"/>
<dbReference type="GeneID" id="93226450"/>
<dbReference type="KEGG" id="asu:Asuc_0759"/>
<dbReference type="eggNOG" id="COG0238">
    <property type="taxonomic scope" value="Bacteria"/>
</dbReference>
<dbReference type="HOGENOM" id="CLU_148710_2_2_6"/>
<dbReference type="OrthoDB" id="9812008at2"/>
<dbReference type="Proteomes" id="UP000001114">
    <property type="component" value="Chromosome"/>
</dbReference>
<dbReference type="GO" id="GO:0022627">
    <property type="term" value="C:cytosolic small ribosomal subunit"/>
    <property type="evidence" value="ECO:0007669"/>
    <property type="project" value="TreeGrafter"/>
</dbReference>
<dbReference type="GO" id="GO:0070181">
    <property type="term" value="F:small ribosomal subunit rRNA binding"/>
    <property type="evidence" value="ECO:0007669"/>
    <property type="project" value="TreeGrafter"/>
</dbReference>
<dbReference type="GO" id="GO:0003735">
    <property type="term" value="F:structural constituent of ribosome"/>
    <property type="evidence" value="ECO:0007669"/>
    <property type="project" value="InterPro"/>
</dbReference>
<dbReference type="GO" id="GO:0006412">
    <property type="term" value="P:translation"/>
    <property type="evidence" value="ECO:0007669"/>
    <property type="project" value="UniProtKB-UniRule"/>
</dbReference>
<dbReference type="FunFam" id="4.10.640.10:FF:000001">
    <property type="entry name" value="30S ribosomal protein S18"/>
    <property type="match status" value="1"/>
</dbReference>
<dbReference type="Gene3D" id="4.10.640.10">
    <property type="entry name" value="Ribosomal protein S18"/>
    <property type="match status" value="1"/>
</dbReference>
<dbReference type="HAMAP" id="MF_00270">
    <property type="entry name" value="Ribosomal_bS18"/>
    <property type="match status" value="1"/>
</dbReference>
<dbReference type="InterPro" id="IPR001648">
    <property type="entry name" value="Ribosomal_bS18"/>
</dbReference>
<dbReference type="InterPro" id="IPR018275">
    <property type="entry name" value="Ribosomal_bS18_CS"/>
</dbReference>
<dbReference type="InterPro" id="IPR036870">
    <property type="entry name" value="Ribosomal_bS18_sf"/>
</dbReference>
<dbReference type="NCBIfam" id="TIGR00165">
    <property type="entry name" value="S18"/>
    <property type="match status" value="1"/>
</dbReference>
<dbReference type="PANTHER" id="PTHR13479">
    <property type="entry name" value="30S RIBOSOMAL PROTEIN S18"/>
    <property type="match status" value="1"/>
</dbReference>
<dbReference type="PANTHER" id="PTHR13479:SF40">
    <property type="entry name" value="SMALL RIBOSOMAL SUBUNIT PROTEIN BS18M"/>
    <property type="match status" value="1"/>
</dbReference>
<dbReference type="Pfam" id="PF01084">
    <property type="entry name" value="Ribosomal_S18"/>
    <property type="match status" value="1"/>
</dbReference>
<dbReference type="PRINTS" id="PR00974">
    <property type="entry name" value="RIBOSOMALS18"/>
</dbReference>
<dbReference type="SUPFAM" id="SSF46911">
    <property type="entry name" value="Ribosomal protein S18"/>
    <property type="match status" value="1"/>
</dbReference>
<dbReference type="PROSITE" id="PS00057">
    <property type="entry name" value="RIBOSOMAL_S18"/>
    <property type="match status" value="1"/>
</dbReference>
<keyword id="KW-1185">Reference proteome</keyword>
<keyword id="KW-0687">Ribonucleoprotein</keyword>
<keyword id="KW-0689">Ribosomal protein</keyword>
<keyword id="KW-0694">RNA-binding</keyword>
<keyword id="KW-0699">rRNA-binding</keyword>
<gene>
    <name evidence="1" type="primary">rpsR</name>
    <name type="ordered locus">Asuc_0759</name>
</gene>
<evidence type="ECO:0000255" key="1">
    <source>
        <dbReference type="HAMAP-Rule" id="MF_00270"/>
    </source>
</evidence>
<evidence type="ECO:0000305" key="2"/>
<reference key="1">
    <citation type="journal article" date="2010" name="BMC Genomics">
        <title>A genomic perspective on the potential of Actinobacillus succinogenes for industrial succinate production.</title>
        <authorList>
            <person name="McKinlay J.B."/>
            <person name="Laivenieks M."/>
            <person name="Schindler B.D."/>
            <person name="McKinlay A.A."/>
            <person name="Siddaramappa S."/>
            <person name="Challacombe J.F."/>
            <person name="Lowry S.R."/>
            <person name="Clum A."/>
            <person name="Lapidus A.L."/>
            <person name="Burkhart K.B."/>
            <person name="Harkins V."/>
            <person name="Vieille C."/>
        </authorList>
    </citation>
    <scope>NUCLEOTIDE SEQUENCE [LARGE SCALE GENOMIC DNA]</scope>
    <source>
        <strain>ATCC 55618 / DSM 22257 / CCUG 43843 / 130Z</strain>
    </source>
</reference>
<organism>
    <name type="scientific">Actinobacillus succinogenes (strain ATCC 55618 / DSM 22257 / CCUG 43843 / 130Z)</name>
    <dbReference type="NCBI Taxonomy" id="339671"/>
    <lineage>
        <taxon>Bacteria</taxon>
        <taxon>Pseudomonadati</taxon>
        <taxon>Pseudomonadota</taxon>
        <taxon>Gammaproteobacteria</taxon>
        <taxon>Pasteurellales</taxon>
        <taxon>Pasteurellaceae</taxon>
        <taxon>Actinobacillus</taxon>
    </lineage>
</organism>
<sequence>MARYFRRRKFCRFTAENVVEIDYKDIATLKNYITESGKIVPSRITGTRAKYQRQLARAIKRARYLALLPYTDNHQ</sequence>
<proteinExistence type="inferred from homology"/>